<comment type="function">
    <text evidence="1">Catalyzes the interconversion of 2-phosphoglycerate and 3-phosphoglycerate.</text>
</comment>
<comment type="catalytic activity">
    <reaction evidence="1">
        <text>(2R)-2-phosphoglycerate = (2R)-3-phosphoglycerate</text>
        <dbReference type="Rhea" id="RHEA:15901"/>
        <dbReference type="ChEBI" id="CHEBI:58272"/>
        <dbReference type="ChEBI" id="CHEBI:58289"/>
        <dbReference type="EC" id="5.4.2.11"/>
    </reaction>
</comment>
<comment type="pathway">
    <text evidence="1">Carbohydrate degradation; glycolysis; pyruvate from D-glyceraldehyde 3-phosphate: step 3/5.</text>
</comment>
<comment type="subunit">
    <text evidence="1">Homodimer.</text>
</comment>
<comment type="similarity">
    <text evidence="1">Belongs to the phosphoglycerate mutase family. BPG-dependent PGAM subfamily.</text>
</comment>
<sequence>MKKLVLLRHGESVWNRENRFTGWTDVGLSEKGIEEAISAGRTLKEEGFVFDVAYTSVLKRAIKTLWLVLEEMDLMWIPEYRHWRLNERHYGALQGLNKAETAERHGMEQVMIWRRSYDIPPPPLTPDDQRFPGSDPRYASLLPEELPLTESLKDTVARFLPYWHETIAPAVKEGKRVLVTAHGNSLRALVKYLDLVSDSEIVNLNIPTGIPLVYELTDNMTPIRSYYLGDPDDVARASRMVADQIKK</sequence>
<keyword id="KW-0312">Gluconeogenesis</keyword>
<keyword id="KW-0324">Glycolysis</keyword>
<keyword id="KW-0413">Isomerase</keyword>
<keyword id="KW-1185">Reference proteome</keyword>
<accession>Q39V40</accession>
<organism>
    <name type="scientific">Geobacter metallireducens (strain ATCC 53774 / DSM 7210 / GS-15)</name>
    <dbReference type="NCBI Taxonomy" id="269799"/>
    <lineage>
        <taxon>Bacteria</taxon>
        <taxon>Pseudomonadati</taxon>
        <taxon>Thermodesulfobacteriota</taxon>
        <taxon>Desulfuromonadia</taxon>
        <taxon>Geobacterales</taxon>
        <taxon>Geobacteraceae</taxon>
        <taxon>Geobacter</taxon>
    </lineage>
</organism>
<name>GPMA_GEOMG</name>
<feature type="chain" id="PRO_0000229121" description="2,3-bisphosphoglycerate-dependent phosphoglycerate mutase">
    <location>
        <begin position="1"/>
        <end position="247"/>
    </location>
</feature>
<feature type="active site" description="Tele-phosphohistidine intermediate" evidence="1">
    <location>
        <position position="9"/>
    </location>
</feature>
<feature type="active site" description="Proton donor/acceptor" evidence="1">
    <location>
        <position position="87"/>
    </location>
</feature>
<feature type="binding site" evidence="1">
    <location>
        <begin position="8"/>
        <end position="15"/>
    </location>
    <ligand>
        <name>substrate</name>
    </ligand>
</feature>
<feature type="binding site" evidence="1">
    <location>
        <begin position="21"/>
        <end position="22"/>
    </location>
    <ligand>
        <name>substrate</name>
    </ligand>
</feature>
<feature type="binding site" evidence="1">
    <location>
        <position position="60"/>
    </location>
    <ligand>
        <name>substrate</name>
    </ligand>
</feature>
<feature type="binding site" evidence="1">
    <location>
        <begin position="87"/>
        <end position="90"/>
    </location>
    <ligand>
        <name>substrate</name>
    </ligand>
</feature>
<feature type="binding site" evidence="1">
    <location>
        <position position="98"/>
    </location>
    <ligand>
        <name>substrate</name>
    </ligand>
</feature>
<feature type="binding site" evidence="1">
    <location>
        <begin position="114"/>
        <end position="115"/>
    </location>
    <ligand>
        <name>substrate</name>
    </ligand>
</feature>
<feature type="binding site" evidence="1">
    <location>
        <begin position="183"/>
        <end position="184"/>
    </location>
    <ligand>
        <name>substrate</name>
    </ligand>
</feature>
<feature type="site" description="Transition state stabilizer" evidence="1">
    <location>
        <position position="182"/>
    </location>
</feature>
<dbReference type="EC" id="5.4.2.11" evidence="1"/>
<dbReference type="EMBL" id="CP000148">
    <property type="protein sequence ID" value="ABB31884.1"/>
    <property type="molecule type" value="Genomic_DNA"/>
</dbReference>
<dbReference type="RefSeq" id="WP_004511410.1">
    <property type="nucleotide sequence ID" value="NC_007517.1"/>
</dbReference>
<dbReference type="SMR" id="Q39V40"/>
<dbReference type="STRING" id="269799.Gmet_1653"/>
<dbReference type="KEGG" id="gme:Gmet_1653"/>
<dbReference type="eggNOG" id="COG0588">
    <property type="taxonomic scope" value="Bacteria"/>
</dbReference>
<dbReference type="HOGENOM" id="CLU_033323_1_1_7"/>
<dbReference type="UniPathway" id="UPA00109">
    <property type="reaction ID" value="UER00186"/>
</dbReference>
<dbReference type="Proteomes" id="UP000007073">
    <property type="component" value="Chromosome"/>
</dbReference>
<dbReference type="GO" id="GO:0004619">
    <property type="term" value="F:phosphoglycerate mutase activity"/>
    <property type="evidence" value="ECO:0007669"/>
    <property type="project" value="UniProtKB-EC"/>
</dbReference>
<dbReference type="GO" id="GO:0006094">
    <property type="term" value="P:gluconeogenesis"/>
    <property type="evidence" value="ECO:0007669"/>
    <property type="project" value="UniProtKB-UniRule"/>
</dbReference>
<dbReference type="GO" id="GO:0006096">
    <property type="term" value="P:glycolytic process"/>
    <property type="evidence" value="ECO:0007669"/>
    <property type="project" value="UniProtKB-UniRule"/>
</dbReference>
<dbReference type="CDD" id="cd07067">
    <property type="entry name" value="HP_PGM_like"/>
    <property type="match status" value="1"/>
</dbReference>
<dbReference type="FunFam" id="3.40.50.1240:FF:000003">
    <property type="entry name" value="2,3-bisphosphoglycerate-dependent phosphoglycerate mutase"/>
    <property type="match status" value="1"/>
</dbReference>
<dbReference type="Gene3D" id="3.40.50.1240">
    <property type="entry name" value="Phosphoglycerate mutase-like"/>
    <property type="match status" value="1"/>
</dbReference>
<dbReference type="HAMAP" id="MF_01039">
    <property type="entry name" value="PGAM_GpmA"/>
    <property type="match status" value="1"/>
</dbReference>
<dbReference type="InterPro" id="IPR013078">
    <property type="entry name" value="His_Pase_superF_clade-1"/>
</dbReference>
<dbReference type="InterPro" id="IPR029033">
    <property type="entry name" value="His_PPase_superfam"/>
</dbReference>
<dbReference type="InterPro" id="IPR001345">
    <property type="entry name" value="PG/BPGM_mutase_AS"/>
</dbReference>
<dbReference type="InterPro" id="IPR005952">
    <property type="entry name" value="Phosphogly_mut1"/>
</dbReference>
<dbReference type="NCBIfam" id="TIGR01258">
    <property type="entry name" value="pgm_1"/>
    <property type="match status" value="1"/>
</dbReference>
<dbReference type="NCBIfam" id="NF010713">
    <property type="entry name" value="PRK14115.1"/>
    <property type="match status" value="1"/>
</dbReference>
<dbReference type="PANTHER" id="PTHR11931">
    <property type="entry name" value="PHOSPHOGLYCERATE MUTASE"/>
    <property type="match status" value="1"/>
</dbReference>
<dbReference type="Pfam" id="PF00300">
    <property type="entry name" value="His_Phos_1"/>
    <property type="match status" value="1"/>
</dbReference>
<dbReference type="PIRSF" id="PIRSF000709">
    <property type="entry name" value="6PFK_2-Ptase"/>
    <property type="match status" value="1"/>
</dbReference>
<dbReference type="SMART" id="SM00855">
    <property type="entry name" value="PGAM"/>
    <property type="match status" value="1"/>
</dbReference>
<dbReference type="SUPFAM" id="SSF53254">
    <property type="entry name" value="Phosphoglycerate mutase-like"/>
    <property type="match status" value="1"/>
</dbReference>
<dbReference type="PROSITE" id="PS00175">
    <property type="entry name" value="PG_MUTASE"/>
    <property type="match status" value="1"/>
</dbReference>
<reference key="1">
    <citation type="journal article" date="2009" name="BMC Microbiol.">
        <title>The genome sequence of Geobacter metallireducens: features of metabolism, physiology and regulation common and dissimilar to Geobacter sulfurreducens.</title>
        <authorList>
            <person name="Aklujkar M."/>
            <person name="Krushkal J."/>
            <person name="DiBartolo G."/>
            <person name="Lapidus A."/>
            <person name="Land M.L."/>
            <person name="Lovley D.R."/>
        </authorList>
    </citation>
    <scope>NUCLEOTIDE SEQUENCE [LARGE SCALE GENOMIC DNA]</scope>
    <source>
        <strain>ATCC 53774 / DSM 7210 / GS-15</strain>
    </source>
</reference>
<gene>
    <name evidence="1" type="primary">gpmA</name>
    <name type="ordered locus">Gmet_1653</name>
</gene>
<protein>
    <recommendedName>
        <fullName evidence="1">2,3-bisphosphoglycerate-dependent phosphoglycerate mutase</fullName>
        <shortName evidence="1">BPG-dependent PGAM</shortName>
        <shortName evidence="1">PGAM</shortName>
        <shortName evidence="1">Phosphoglyceromutase</shortName>
        <shortName evidence="1">dPGM</shortName>
        <ecNumber evidence="1">5.4.2.11</ecNumber>
    </recommendedName>
</protein>
<evidence type="ECO:0000255" key="1">
    <source>
        <dbReference type="HAMAP-Rule" id="MF_01039"/>
    </source>
</evidence>
<proteinExistence type="inferred from homology"/>